<gene>
    <name evidence="1" type="primary">dapE</name>
    <name type="ordered locus">Nmul_A1852</name>
</gene>
<dbReference type="EC" id="3.5.1.18" evidence="1"/>
<dbReference type="EMBL" id="CP000103">
    <property type="protein sequence ID" value="ABB75147.1"/>
    <property type="molecule type" value="Genomic_DNA"/>
</dbReference>
<dbReference type="RefSeq" id="WP_011381167.1">
    <property type="nucleotide sequence ID" value="NC_007614.1"/>
</dbReference>
<dbReference type="SMR" id="Q2Y7X4"/>
<dbReference type="STRING" id="323848.Nmul_A1852"/>
<dbReference type="KEGG" id="nmu:Nmul_A1852"/>
<dbReference type="eggNOG" id="COG0624">
    <property type="taxonomic scope" value="Bacteria"/>
</dbReference>
<dbReference type="HOGENOM" id="CLU_021802_4_0_4"/>
<dbReference type="OrthoDB" id="9809784at2"/>
<dbReference type="UniPathway" id="UPA00034">
    <property type="reaction ID" value="UER00021"/>
</dbReference>
<dbReference type="Proteomes" id="UP000002718">
    <property type="component" value="Chromosome"/>
</dbReference>
<dbReference type="GO" id="GO:0008777">
    <property type="term" value="F:acetylornithine deacetylase activity"/>
    <property type="evidence" value="ECO:0007669"/>
    <property type="project" value="TreeGrafter"/>
</dbReference>
<dbReference type="GO" id="GO:0050897">
    <property type="term" value="F:cobalt ion binding"/>
    <property type="evidence" value="ECO:0007669"/>
    <property type="project" value="UniProtKB-UniRule"/>
</dbReference>
<dbReference type="GO" id="GO:0009014">
    <property type="term" value="F:succinyl-diaminopimelate desuccinylase activity"/>
    <property type="evidence" value="ECO:0007669"/>
    <property type="project" value="UniProtKB-UniRule"/>
</dbReference>
<dbReference type="GO" id="GO:0008270">
    <property type="term" value="F:zinc ion binding"/>
    <property type="evidence" value="ECO:0007669"/>
    <property type="project" value="UniProtKB-UniRule"/>
</dbReference>
<dbReference type="GO" id="GO:0019877">
    <property type="term" value="P:diaminopimelate biosynthetic process"/>
    <property type="evidence" value="ECO:0007669"/>
    <property type="project" value="UniProtKB-UniRule"/>
</dbReference>
<dbReference type="GO" id="GO:0006526">
    <property type="term" value="P:L-arginine biosynthetic process"/>
    <property type="evidence" value="ECO:0007669"/>
    <property type="project" value="TreeGrafter"/>
</dbReference>
<dbReference type="GO" id="GO:0009089">
    <property type="term" value="P:lysine biosynthetic process via diaminopimelate"/>
    <property type="evidence" value="ECO:0007669"/>
    <property type="project" value="UniProtKB-UniRule"/>
</dbReference>
<dbReference type="CDD" id="cd03891">
    <property type="entry name" value="M20_DapE_proteobac"/>
    <property type="match status" value="1"/>
</dbReference>
<dbReference type="FunFam" id="3.30.70.360:FF:000011">
    <property type="entry name" value="Succinyl-diaminopimelate desuccinylase"/>
    <property type="match status" value="1"/>
</dbReference>
<dbReference type="FunFam" id="3.40.630.10:FF:000005">
    <property type="entry name" value="Succinyl-diaminopimelate desuccinylase"/>
    <property type="match status" value="1"/>
</dbReference>
<dbReference type="Gene3D" id="3.40.630.10">
    <property type="entry name" value="Zn peptidases"/>
    <property type="match status" value="2"/>
</dbReference>
<dbReference type="HAMAP" id="MF_01690">
    <property type="entry name" value="DapE"/>
    <property type="match status" value="1"/>
</dbReference>
<dbReference type="InterPro" id="IPR036264">
    <property type="entry name" value="Bact_exopeptidase_dim_dom"/>
</dbReference>
<dbReference type="InterPro" id="IPR005941">
    <property type="entry name" value="DapE_proteobac"/>
</dbReference>
<dbReference type="InterPro" id="IPR002933">
    <property type="entry name" value="Peptidase_M20"/>
</dbReference>
<dbReference type="InterPro" id="IPR011650">
    <property type="entry name" value="Peptidase_M20_dimer"/>
</dbReference>
<dbReference type="InterPro" id="IPR050072">
    <property type="entry name" value="Peptidase_M20A"/>
</dbReference>
<dbReference type="NCBIfam" id="TIGR01246">
    <property type="entry name" value="dapE_proteo"/>
    <property type="match status" value="1"/>
</dbReference>
<dbReference type="NCBIfam" id="NF009557">
    <property type="entry name" value="PRK13009.1"/>
    <property type="match status" value="1"/>
</dbReference>
<dbReference type="PANTHER" id="PTHR43808">
    <property type="entry name" value="ACETYLORNITHINE DEACETYLASE"/>
    <property type="match status" value="1"/>
</dbReference>
<dbReference type="PANTHER" id="PTHR43808:SF31">
    <property type="entry name" value="N-ACETYL-L-CITRULLINE DEACETYLASE"/>
    <property type="match status" value="1"/>
</dbReference>
<dbReference type="Pfam" id="PF07687">
    <property type="entry name" value="M20_dimer"/>
    <property type="match status" value="1"/>
</dbReference>
<dbReference type="Pfam" id="PF01546">
    <property type="entry name" value="Peptidase_M20"/>
    <property type="match status" value="1"/>
</dbReference>
<dbReference type="SUPFAM" id="SSF55031">
    <property type="entry name" value="Bacterial exopeptidase dimerisation domain"/>
    <property type="match status" value="1"/>
</dbReference>
<dbReference type="SUPFAM" id="SSF53187">
    <property type="entry name" value="Zn-dependent exopeptidases"/>
    <property type="match status" value="1"/>
</dbReference>
<dbReference type="PROSITE" id="PS00759">
    <property type="entry name" value="ARGE_DAPE_CPG2_2"/>
    <property type="match status" value="1"/>
</dbReference>
<protein>
    <recommendedName>
        <fullName evidence="1">Succinyl-diaminopimelate desuccinylase</fullName>
        <shortName evidence="1">SDAP desuccinylase</shortName>
        <ecNumber evidence="1">3.5.1.18</ecNumber>
    </recommendedName>
    <alternativeName>
        <fullName evidence="1">N-succinyl-LL-2,6-diaminoheptanedioate amidohydrolase</fullName>
    </alternativeName>
</protein>
<accession>Q2Y7X4</accession>
<proteinExistence type="inferred from homology"/>
<feature type="chain" id="PRO_0000375633" description="Succinyl-diaminopimelate desuccinylase">
    <location>
        <begin position="1"/>
        <end position="378"/>
    </location>
</feature>
<feature type="active site" evidence="1">
    <location>
        <position position="69"/>
    </location>
</feature>
<feature type="active site" description="Proton acceptor" evidence="1">
    <location>
        <position position="134"/>
    </location>
</feature>
<feature type="binding site" evidence="1">
    <location>
        <position position="67"/>
    </location>
    <ligand>
        <name>Zn(2+)</name>
        <dbReference type="ChEBI" id="CHEBI:29105"/>
        <label>1</label>
    </ligand>
</feature>
<feature type="binding site" evidence="1">
    <location>
        <position position="100"/>
    </location>
    <ligand>
        <name>Zn(2+)</name>
        <dbReference type="ChEBI" id="CHEBI:29105"/>
        <label>1</label>
    </ligand>
</feature>
<feature type="binding site" evidence="1">
    <location>
        <position position="100"/>
    </location>
    <ligand>
        <name>Zn(2+)</name>
        <dbReference type="ChEBI" id="CHEBI:29105"/>
        <label>2</label>
    </ligand>
</feature>
<feature type="binding site" evidence="1">
    <location>
        <position position="135"/>
    </location>
    <ligand>
        <name>Zn(2+)</name>
        <dbReference type="ChEBI" id="CHEBI:29105"/>
        <label>2</label>
    </ligand>
</feature>
<feature type="binding site" evidence="1">
    <location>
        <position position="163"/>
    </location>
    <ligand>
        <name>Zn(2+)</name>
        <dbReference type="ChEBI" id="CHEBI:29105"/>
        <label>1</label>
    </ligand>
</feature>
<feature type="binding site" evidence="1">
    <location>
        <position position="349"/>
    </location>
    <ligand>
        <name>Zn(2+)</name>
        <dbReference type="ChEBI" id="CHEBI:29105"/>
        <label>2</label>
    </ligand>
</feature>
<keyword id="KW-0028">Amino-acid biosynthesis</keyword>
<keyword id="KW-0170">Cobalt</keyword>
<keyword id="KW-0220">Diaminopimelate biosynthesis</keyword>
<keyword id="KW-0378">Hydrolase</keyword>
<keyword id="KW-0457">Lysine biosynthesis</keyword>
<keyword id="KW-0479">Metal-binding</keyword>
<keyword id="KW-1185">Reference proteome</keyword>
<keyword id="KW-0862">Zinc</keyword>
<sequence>MLNDTLALAQMLIARRSPTPFDNGCQEILIDRLEKMGFDIERIRCGEVDNLWARRGTEAPLICFAGHTDVVPTGPLEKWESSPFDPVTRNGRLYGRGAADMKGSIAAFITSIEAFVAEHPDHNGSIALLITSDEEGIAVDGTVRVVEVLKARNELIDYCIVGEPTSVDKLGDMIKNGRRGSLSGTLTVKGIQGHIAYPHLAKNPIHLAAPAIAELANTEWDEGNEYFPPTTWQISNINGGTGATNVIPGEVTVLFNFRFSTASTIESLKARVHGILDRHNLEYDLQWENSGKPYLTPRGDLVDAVNAAIHTVTGIEPELSTSGGTSDGRFIADICPQVVELGPRNATIHKINEYVEVSDLDQLPRIYQLTMESLLLRK</sequence>
<organism>
    <name type="scientific">Nitrosospira multiformis (strain ATCC 25196 / NCIMB 11849 / C 71)</name>
    <dbReference type="NCBI Taxonomy" id="323848"/>
    <lineage>
        <taxon>Bacteria</taxon>
        <taxon>Pseudomonadati</taxon>
        <taxon>Pseudomonadota</taxon>
        <taxon>Betaproteobacteria</taxon>
        <taxon>Nitrosomonadales</taxon>
        <taxon>Nitrosomonadaceae</taxon>
        <taxon>Nitrosospira</taxon>
    </lineage>
</organism>
<comment type="function">
    <text evidence="1">Catalyzes the hydrolysis of N-succinyl-L,L-diaminopimelic acid (SDAP), forming succinate and LL-2,6-diaminopimelate (DAP), an intermediate involved in the bacterial biosynthesis of lysine and meso-diaminopimelic acid, an essential component of bacterial cell walls.</text>
</comment>
<comment type="catalytic activity">
    <reaction evidence="1">
        <text>N-succinyl-(2S,6S)-2,6-diaminopimelate + H2O = (2S,6S)-2,6-diaminopimelate + succinate</text>
        <dbReference type="Rhea" id="RHEA:22608"/>
        <dbReference type="ChEBI" id="CHEBI:15377"/>
        <dbReference type="ChEBI" id="CHEBI:30031"/>
        <dbReference type="ChEBI" id="CHEBI:57609"/>
        <dbReference type="ChEBI" id="CHEBI:58087"/>
        <dbReference type="EC" id="3.5.1.18"/>
    </reaction>
</comment>
<comment type="cofactor">
    <cofactor evidence="1">
        <name>Zn(2+)</name>
        <dbReference type="ChEBI" id="CHEBI:29105"/>
    </cofactor>
    <cofactor evidence="1">
        <name>Co(2+)</name>
        <dbReference type="ChEBI" id="CHEBI:48828"/>
    </cofactor>
    <text evidence="1">Binds 2 Zn(2+) or Co(2+) ions per subunit.</text>
</comment>
<comment type="pathway">
    <text evidence="1">Amino-acid biosynthesis; L-lysine biosynthesis via DAP pathway; LL-2,6-diaminopimelate from (S)-tetrahydrodipicolinate (succinylase route): step 3/3.</text>
</comment>
<comment type="subunit">
    <text evidence="1">Homodimer.</text>
</comment>
<comment type="similarity">
    <text evidence="1">Belongs to the peptidase M20A family. DapE subfamily.</text>
</comment>
<reference key="1">
    <citation type="submission" date="2005-08" db="EMBL/GenBank/DDBJ databases">
        <title>Complete sequence of chromosome 1 of Nitrosospira multiformis ATCC 25196.</title>
        <authorList>
            <person name="Copeland A."/>
            <person name="Lucas S."/>
            <person name="Lapidus A."/>
            <person name="Barry K."/>
            <person name="Detter J.C."/>
            <person name="Glavina T."/>
            <person name="Hammon N."/>
            <person name="Israni S."/>
            <person name="Pitluck S."/>
            <person name="Chain P."/>
            <person name="Malfatti S."/>
            <person name="Shin M."/>
            <person name="Vergez L."/>
            <person name="Schmutz J."/>
            <person name="Larimer F."/>
            <person name="Land M."/>
            <person name="Hauser L."/>
            <person name="Kyrpides N."/>
            <person name="Lykidis A."/>
            <person name="Richardson P."/>
        </authorList>
    </citation>
    <scope>NUCLEOTIDE SEQUENCE [LARGE SCALE GENOMIC DNA]</scope>
    <source>
        <strain>ATCC 25196 / NCIMB 11849 / C 71</strain>
    </source>
</reference>
<name>DAPE_NITMU</name>
<evidence type="ECO:0000255" key="1">
    <source>
        <dbReference type="HAMAP-Rule" id="MF_01690"/>
    </source>
</evidence>